<proteinExistence type="inferred from homology"/>
<reference key="1">
    <citation type="journal article" date="2005" name="J. Bacteriol.">
        <title>Completion of the genome sequence of Brucella abortus and comparison to the highly similar genomes of Brucella melitensis and Brucella suis.</title>
        <authorList>
            <person name="Halling S.M."/>
            <person name="Peterson-Burch B.D."/>
            <person name="Bricker B.J."/>
            <person name="Zuerner R.L."/>
            <person name="Qing Z."/>
            <person name="Li L.-L."/>
            <person name="Kapur V."/>
            <person name="Alt D.P."/>
            <person name="Olsen S.C."/>
        </authorList>
    </citation>
    <scope>NUCLEOTIDE SEQUENCE [LARGE SCALE GENOMIC DNA]</scope>
    <source>
        <strain>9-941</strain>
    </source>
</reference>
<comment type="function">
    <text evidence="1">An accessory protein needed during the final step in the assembly of 30S ribosomal subunit, possibly for assembly of the head region. Essential for efficient processing of 16S rRNA. May be needed both before and after RbfA during the maturation of 16S rRNA. It has affinity for free ribosomal 30S subunits but not for 70S ribosomes.</text>
</comment>
<comment type="subunit">
    <text evidence="1">Binds ribosomal protein uS19.</text>
</comment>
<comment type="subcellular location">
    <subcellularLocation>
        <location evidence="1">Cytoplasm</location>
    </subcellularLocation>
</comment>
<comment type="domain">
    <text evidence="1">The PRC barrel domain binds ribosomal protein uS19.</text>
</comment>
<comment type="similarity">
    <text evidence="1">Belongs to the RimM family.</text>
</comment>
<sequence>MPRPENPIQLAVIGAAHGTRGEVRVKTFTGDPLAIADYGLLYDEQGKAYEILEARVAKTVVIVRFKGVNDRNAAEALNGTELFIDRSQLPDEELDEDEFFQTDLIGLEAVDGDGKSYGVVSAIFDFGGGDLIELSEKGKRPMLIPFTEAAVPEIDFDKGIIKVEPHAAGLIADEHDNPPHESGKKPKKP</sequence>
<evidence type="ECO:0000255" key="1">
    <source>
        <dbReference type="HAMAP-Rule" id="MF_00014"/>
    </source>
</evidence>
<evidence type="ECO:0000256" key="2">
    <source>
        <dbReference type="SAM" id="MobiDB-lite"/>
    </source>
</evidence>
<keyword id="KW-0143">Chaperone</keyword>
<keyword id="KW-0963">Cytoplasm</keyword>
<keyword id="KW-0690">Ribosome biogenesis</keyword>
<keyword id="KW-0698">rRNA processing</keyword>
<name>RIMM_BRUAB</name>
<organism>
    <name type="scientific">Brucella abortus biovar 1 (strain 9-941)</name>
    <dbReference type="NCBI Taxonomy" id="262698"/>
    <lineage>
        <taxon>Bacteria</taxon>
        <taxon>Pseudomonadati</taxon>
        <taxon>Pseudomonadota</taxon>
        <taxon>Alphaproteobacteria</taxon>
        <taxon>Hyphomicrobiales</taxon>
        <taxon>Brucellaceae</taxon>
        <taxon>Brucella/Ochrobactrum group</taxon>
        <taxon>Brucella</taxon>
    </lineage>
</organism>
<protein>
    <recommendedName>
        <fullName evidence="1">Ribosome maturation factor RimM</fullName>
    </recommendedName>
</protein>
<accession>Q57AY3</accession>
<gene>
    <name evidence="1" type="primary">rimM</name>
    <name type="ordered locus">BruAb1_1891</name>
</gene>
<dbReference type="EMBL" id="AE017223">
    <property type="protein sequence ID" value="AAX75201.1"/>
    <property type="molecule type" value="Genomic_DNA"/>
</dbReference>
<dbReference type="RefSeq" id="WP_002964983.1">
    <property type="nucleotide sequence ID" value="NC_006932.1"/>
</dbReference>
<dbReference type="SMR" id="Q57AY3"/>
<dbReference type="EnsemblBacteria" id="AAX75201">
    <property type="protein sequence ID" value="AAX75201"/>
    <property type="gene ID" value="BruAb1_1891"/>
</dbReference>
<dbReference type="GeneID" id="93017753"/>
<dbReference type="KEGG" id="bmb:BruAb1_1891"/>
<dbReference type="HOGENOM" id="CLU_077636_0_1_5"/>
<dbReference type="Proteomes" id="UP000000540">
    <property type="component" value="Chromosome I"/>
</dbReference>
<dbReference type="GO" id="GO:0005737">
    <property type="term" value="C:cytoplasm"/>
    <property type="evidence" value="ECO:0007669"/>
    <property type="project" value="UniProtKB-SubCell"/>
</dbReference>
<dbReference type="GO" id="GO:0005840">
    <property type="term" value="C:ribosome"/>
    <property type="evidence" value="ECO:0007669"/>
    <property type="project" value="InterPro"/>
</dbReference>
<dbReference type="GO" id="GO:0043022">
    <property type="term" value="F:ribosome binding"/>
    <property type="evidence" value="ECO:0007669"/>
    <property type="project" value="InterPro"/>
</dbReference>
<dbReference type="GO" id="GO:0042274">
    <property type="term" value="P:ribosomal small subunit biogenesis"/>
    <property type="evidence" value="ECO:0007669"/>
    <property type="project" value="UniProtKB-UniRule"/>
</dbReference>
<dbReference type="GO" id="GO:0006364">
    <property type="term" value="P:rRNA processing"/>
    <property type="evidence" value="ECO:0007669"/>
    <property type="project" value="UniProtKB-UniRule"/>
</dbReference>
<dbReference type="Gene3D" id="2.30.30.240">
    <property type="entry name" value="PRC-barrel domain"/>
    <property type="match status" value="1"/>
</dbReference>
<dbReference type="Gene3D" id="2.40.30.60">
    <property type="entry name" value="RimM"/>
    <property type="match status" value="1"/>
</dbReference>
<dbReference type="HAMAP" id="MF_00014">
    <property type="entry name" value="Ribosome_mat_RimM"/>
    <property type="match status" value="1"/>
</dbReference>
<dbReference type="InterPro" id="IPR011033">
    <property type="entry name" value="PRC_barrel-like_sf"/>
</dbReference>
<dbReference type="InterPro" id="IPR056792">
    <property type="entry name" value="PRC_RimM"/>
</dbReference>
<dbReference type="InterPro" id="IPR011961">
    <property type="entry name" value="RimM"/>
</dbReference>
<dbReference type="InterPro" id="IPR002676">
    <property type="entry name" value="RimM_N"/>
</dbReference>
<dbReference type="InterPro" id="IPR036976">
    <property type="entry name" value="RimM_N_sf"/>
</dbReference>
<dbReference type="InterPro" id="IPR009000">
    <property type="entry name" value="Transl_B-barrel_sf"/>
</dbReference>
<dbReference type="NCBIfam" id="TIGR02273">
    <property type="entry name" value="16S_RimM"/>
    <property type="match status" value="1"/>
</dbReference>
<dbReference type="PANTHER" id="PTHR33692">
    <property type="entry name" value="RIBOSOME MATURATION FACTOR RIMM"/>
    <property type="match status" value="1"/>
</dbReference>
<dbReference type="PANTHER" id="PTHR33692:SF1">
    <property type="entry name" value="RIBOSOME MATURATION FACTOR RIMM"/>
    <property type="match status" value="1"/>
</dbReference>
<dbReference type="Pfam" id="PF24986">
    <property type="entry name" value="PRC_RimM"/>
    <property type="match status" value="1"/>
</dbReference>
<dbReference type="Pfam" id="PF01782">
    <property type="entry name" value="RimM"/>
    <property type="match status" value="1"/>
</dbReference>
<dbReference type="SUPFAM" id="SSF50346">
    <property type="entry name" value="PRC-barrel domain"/>
    <property type="match status" value="1"/>
</dbReference>
<dbReference type="SUPFAM" id="SSF50447">
    <property type="entry name" value="Translation proteins"/>
    <property type="match status" value="1"/>
</dbReference>
<feature type="chain" id="PRO_0000244114" description="Ribosome maturation factor RimM">
    <location>
        <begin position="1"/>
        <end position="189"/>
    </location>
</feature>
<feature type="domain" description="PRC barrel" evidence="1">
    <location>
        <begin position="96"/>
        <end position="169"/>
    </location>
</feature>
<feature type="region of interest" description="Disordered" evidence="2">
    <location>
        <begin position="168"/>
        <end position="189"/>
    </location>
</feature>
<feature type="compositionally biased region" description="Basic and acidic residues" evidence="2">
    <location>
        <begin position="172"/>
        <end position="189"/>
    </location>
</feature>